<gene>
    <name evidence="1" type="primary">pckG</name>
    <name type="ordered locus">RER_10900</name>
</gene>
<name>PCKG_RHOE4</name>
<feature type="chain" id="PRO_1000206233" description="Phosphoenolpyruvate carboxykinase [GTP]">
    <location>
        <begin position="1"/>
        <end position="609"/>
    </location>
</feature>
<feature type="active site" evidence="1">
    <location>
        <position position="277"/>
    </location>
</feature>
<feature type="binding site" evidence="1">
    <location>
        <position position="85"/>
    </location>
    <ligand>
        <name>substrate</name>
    </ligand>
</feature>
<feature type="binding site" evidence="1">
    <location>
        <begin position="224"/>
        <end position="226"/>
    </location>
    <ligand>
        <name>substrate</name>
    </ligand>
</feature>
<feature type="binding site" evidence="1">
    <location>
        <position position="233"/>
    </location>
    <ligand>
        <name>Mn(2+)</name>
        <dbReference type="ChEBI" id="CHEBI:29035"/>
    </ligand>
</feature>
<feature type="binding site" evidence="1">
    <location>
        <position position="253"/>
    </location>
    <ligand>
        <name>Mn(2+)</name>
        <dbReference type="ChEBI" id="CHEBI:29035"/>
    </ligand>
</feature>
<feature type="binding site" evidence="1">
    <location>
        <position position="275"/>
    </location>
    <ligand>
        <name>substrate</name>
    </ligand>
</feature>
<feature type="binding site" evidence="1">
    <location>
        <begin position="276"/>
        <end position="281"/>
    </location>
    <ligand>
        <name>GTP</name>
        <dbReference type="ChEBI" id="CHEBI:37565"/>
    </ligand>
</feature>
<feature type="binding site" evidence="1">
    <location>
        <position position="300"/>
    </location>
    <ligand>
        <name>Mn(2+)</name>
        <dbReference type="ChEBI" id="CHEBI:29035"/>
    </ligand>
</feature>
<feature type="binding site" evidence="1">
    <location>
        <begin position="390"/>
        <end position="392"/>
    </location>
    <ligand>
        <name>substrate</name>
    </ligand>
</feature>
<feature type="binding site" evidence="1">
    <location>
        <position position="392"/>
    </location>
    <ligand>
        <name>GTP</name>
        <dbReference type="ChEBI" id="CHEBI:37565"/>
    </ligand>
</feature>
<feature type="binding site" evidence="1">
    <location>
        <position position="423"/>
    </location>
    <ligand>
        <name>GTP</name>
        <dbReference type="ChEBI" id="CHEBI:37565"/>
    </ligand>
</feature>
<feature type="binding site" evidence="1">
    <location>
        <begin position="518"/>
        <end position="521"/>
    </location>
    <ligand>
        <name>GTP</name>
        <dbReference type="ChEBI" id="CHEBI:37565"/>
    </ligand>
</feature>
<evidence type="ECO:0000255" key="1">
    <source>
        <dbReference type="HAMAP-Rule" id="MF_00452"/>
    </source>
</evidence>
<proteinExistence type="inferred from homology"/>
<keyword id="KW-0963">Cytoplasm</keyword>
<keyword id="KW-0210">Decarboxylase</keyword>
<keyword id="KW-0312">Gluconeogenesis</keyword>
<keyword id="KW-0342">GTP-binding</keyword>
<keyword id="KW-0456">Lyase</keyword>
<keyword id="KW-0464">Manganese</keyword>
<keyword id="KW-0479">Metal-binding</keyword>
<keyword id="KW-0547">Nucleotide-binding</keyword>
<sequence length="609" mass="67398">MTSATIPGLNGTDGTPPTQHKELLAWVQEVAELTQPDRVVFADGSDEEWDRLTTKLVEAGTFTRLNDEKKPNSFLGNSDPSDVARVESRTYICSKEEIDAGPTNNWMDPAEMRTLMGDLYRGCMRGRTMYVVPFCMGPLDAEDPKLGVELTDSEYVVVSMRVMTRMGSKVLDKLGTDGFFVKALHSLGAPLADGQEDVAWPCNDTKYITHFPEDREIWSFGSGYGGNALLGKKCYSLRIASAMAHDEGWLAEHMLILKLISPEDKAYYIAAAFPSACGKTNLAMIQPTIPGWRAETLGDDIAWMRFGEDGQLYAVNPEFGFFGVAPGTNWSSNPNAMRTIDQGNTVFTNVALTDDGDVWWEGLEGDPQHLIDWKGNEWTPESGTHAAHPNSRYCTPMSQCPIMAPEWDDPKGVPISAILFGGRRKTTVPLVTEARDWQHGVFMGATVGSEQTAAAEGQVGTVRRDPMAMLPFLGYNVGDYFQHWIDLGKSADASKLPKVFYVNWFRRGDDGRFLWPGFGENSRVLKWIVERIEHKAAGIDTPIGVVPTGSALDIDGLDVSDADITEALAVNIDEWKAEIPLIEEWFDFVGEKLPTGIRDEFEALKQRLA</sequence>
<organism>
    <name type="scientific">Rhodococcus erythropolis (strain PR4 / NBRC 100887)</name>
    <dbReference type="NCBI Taxonomy" id="234621"/>
    <lineage>
        <taxon>Bacteria</taxon>
        <taxon>Bacillati</taxon>
        <taxon>Actinomycetota</taxon>
        <taxon>Actinomycetes</taxon>
        <taxon>Mycobacteriales</taxon>
        <taxon>Nocardiaceae</taxon>
        <taxon>Rhodococcus</taxon>
        <taxon>Rhodococcus erythropolis group</taxon>
    </lineage>
</organism>
<accession>C0ZRP8</accession>
<protein>
    <recommendedName>
        <fullName evidence="1">Phosphoenolpyruvate carboxykinase [GTP]</fullName>
        <shortName evidence="1">PEP carboxykinase</shortName>
        <shortName evidence="1">PEPCK</shortName>
        <ecNumber evidence="1">4.1.1.32</ecNumber>
    </recommendedName>
</protein>
<dbReference type="EC" id="4.1.1.32" evidence="1"/>
<dbReference type="EMBL" id="AP008957">
    <property type="protein sequence ID" value="BAH31798.1"/>
    <property type="molecule type" value="Genomic_DNA"/>
</dbReference>
<dbReference type="RefSeq" id="WP_020906412.1">
    <property type="nucleotide sequence ID" value="NC_012490.1"/>
</dbReference>
<dbReference type="SMR" id="C0ZRP8"/>
<dbReference type="KEGG" id="rer:RER_10900"/>
<dbReference type="eggNOG" id="COG1274">
    <property type="taxonomic scope" value="Bacteria"/>
</dbReference>
<dbReference type="HOGENOM" id="CLU_028872_1_1_11"/>
<dbReference type="UniPathway" id="UPA00138"/>
<dbReference type="Proteomes" id="UP000002204">
    <property type="component" value="Chromosome"/>
</dbReference>
<dbReference type="GO" id="GO:0005829">
    <property type="term" value="C:cytosol"/>
    <property type="evidence" value="ECO:0007669"/>
    <property type="project" value="TreeGrafter"/>
</dbReference>
<dbReference type="GO" id="GO:0005525">
    <property type="term" value="F:GTP binding"/>
    <property type="evidence" value="ECO:0007669"/>
    <property type="project" value="UniProtKB-UniRule"/>
</dbReference>
<dbReference type="GO" id="GO:0030145">
    <property type="term" value="F:manganese ion binding"/>
    <property type="evidence" value="ECO:0007669"/>
    <property type="project" value="UniProtKB-UniRule"/>
</dbReference>
<dbReference type="GO" id="GO:0004613">
    <property type="term" value="F:phosphoenolpyruvate carboxykinase (GTP) activity"/>
    <property type="evidence" value="ECO:0007669"/>
    <property type="project" value="UniProtKB-UniRule"/>
</dbReference>
<dbReference type="GO" id="GO:0071333">
    <property type="term" value="P:cellular response to glucose stimulus"/>
    <property type="evidence" value="ECO:0007669"/>
    <property type="project" value="TreeGrafter"/>
</dbReference>
<dbReference type="GO" id="GO:0006094">
    <property type="term" value="P:gluconeogenesis"/>
    <property type="evidence" value="ECO:0007669"/>
    <property type="project" value="UniProtKB-UniRule"/>
</dbReference>
<dbReference type="GO" id="GO:0046327">
    <property type="term" value="P:glycerol biosynthetic process from pyruvate"/>
    <property type="evidence" value="ECO:0007669"/>
    <property type="project" value="TreeGrafter"/>
</dbReference>
<dbReference type="GO" id="GO:0006107">
    <property type="term" value="P:oxaloacetate metabolic process"/>
    <property type="evidence" value="ECO:0007669"/>
    <property type="project" value="TreeGrafter"/>
</dbReference>
<dbReference type="GO" id="GO:0019543">
    <property type="term" value="P:propionate catabolic process"/>
    <property type="evidence" value="ECO:0007669"/>
    <property type="project" value="TreeGrafter"/>
</dbReference>
<dbReference type="GO" id="GO:0033993">
    <property type="term" value="P:response to lipid"/>
    <property type="evidence" value="ECO:0007669"/>
    <property type="project" value="TreeGrafter"/>
</dbReference>
<dbReference type="GO" id="GO:0042594">
    <property type="term" value="P:response to starvation"/>
    <property type="evidence" value="ECO:0007669"/>
    <property type="project" value="TreeGrafter"/>
</dbReference>
<dbReference type="CDD" id="cd00819">
    <property type="entry name" value="PEPCK_GTP"/>
    <property type="match status" value="1"/>
</dbReference>
<dbReference type="FunFam" id="3.40.449.10:FF:000005">
    <property type="entry name" value="Phosphoenolpyruvate carboxykinase [GTP]"/>
    <property type="match status" value="1"/>
</dbReference>
<dbReference type="Gene3D" id="3.90.228.20">
    <property type="match status" value="1"/>
</dbReference>
<dbReference type="Gene3D" id="3.40.449.10">
    <property type="entry name" value="Phosphoenolpyruvate Carboxykinase, domain 1"/>
    <property type="match status" value="1"/>
</dbReference>
<dbReference type="Gene3D" id="2.170.8.10">
    <property type="entry name" value="Phosphoenolpyruvate Carboxykinase, domain 2"/>
    <property type="match status" value="1"/>
</dbReference>
<dbReference type="HAMAP" id="MF_00452">
    <property type="entry name" value="PEPCK_GTP"/>
    <property type="match status" value="1"/>
</dbReference>
<dbReference type="InterPro" id="IPR018091">
    <property type="entry name" value="PEP_carboxykin_GTP_CS"/>
</dbReference>
<dbReference type="InterPro" id="IPR013035">
    <property type="entry name" value="PEP_carboxykinase_C"/>
</dbReference>
<dbReference type="InterPro" id="IPR008209">
    <property type="entry name" value="PEP_carboxykinase_GTP"/>
</dbReference>
<dbReference type="InterPro" id="IPR035077">
    <property type="entry name" value="PEP_carboxykinase_GTP_C"/>
</dbReference>
<dbReference type="InterPro" id="IPR035078">
    <property type="entry name" value="PEP_carboxykinase_GTP_N"/>
</dbReference>
<dbReference type="InterPro" id="IPR008210">
    <property type="entry name" value="PEP_carboxykinase_N"/>
</dbReference>
<dbReference type="NCBIfam" id="NF003253">
    <property type="entry name" value="PRK04210.1"/>
    <property type="match status" value="1"/>
</dbReference>
<dbReference type="PANTHER" id="PTHR11561">
    <property type="entry name" value="PHOSPHOENOLPYRUVATE CARBOXYKINASE"/>
    <property type="match status" value="1"/>
</dbReference>
<dbReference type="PANTHER" id="PTHR11561:SF0">
    <property type="entry name" value="PHOSPHOENOLPYRUVATE CARBOXYKINASE [GTP]-RELATED"/>
    <property type="match status" value="1"/>
</dbReference>
<dbReference type="Pfam" id="PF00821">
    <property type="entry name" value="PEPCK_GTP"/>
    <property type="match status" value="1"/>
</dbReference>
<dbReference type="Pfam" id="PF17297">
    <property type="entry name" value="PEPCK_N"/>
    <property type="match status" value="1"/>
</dbReference>
<dbReference type="PIRSF" id="PIRSF001348">
    <property type="entry name" value="PEP_carboxykinase_GTP"/>
    <property type="match status" value="1"/>
</dbReference>
<dbReference type="SUPFAM" id="SSF68923">
    <property type="entry name" value="PEP carboxykinase N-terminal domain"/>
    <property type="match status" value="1"/>
</dbReference>
<dbReference type="SUPFAM" id="SSF53795">
    <property type="entry name" value="PEP carboxykinase-like"/>
    <property type="match status" value="1"/>
</dbReference>
<dbReference type="PROSITE" id="PS00505">
    <property type="entry name" value="PEPCK_GTP"/>
    <property type="match status" value="1"/>
</dbReference>
<comment type="function">
    <text evidence="1">Catalyzes the conversion of oxaloacetate (OAA) to phosphoenolpyruvate (PEP), the rate-limiting step in the metabolic pathway that produces glucose from lactate and other precursors derived from the citric acid cycle.</text>
</comment>
<comment type="catalytic activity">
    <reaction evidence="1">
        <text>oxaloacetate + GTP = phosphoenolpyruvate + GDP + CO2</text>
        <dbReference type="Rhea" id="RHEA:10388"/>
        <dbReference type="ChEBI" id="CHEBI:16452"/>
        <dbReference type="ChEBI" id="CHEBI:16526"/>
        <dbReference type="ChEBI" id="CHEBI:37565"/>
        <dbReference type="ChEBI" id="CHEBI:58189"/>
        <dbReference type="ChEBI" id="CHEBI:58702"/>
        <dbReference type="EC" id="4.1.1.32"/>
    </reaction>
</comment>
<comment type="cofactor">
    <cofactor evidence="1">
        <name>Mn(2+)</name>
        <dbReference type="ChEBI" id="CHEBI:29035"/>
    </cofactor>
    <text evidence="1">Binds 1 Mn(2+) ion per subunit.</text>
</comment>
<comment type="pathway">
    <text evidence="1">Carbohydrate biosynthesis; gluconeogenesis.</text>
</comment>
<comment type="subunit">
    <text evidence="1">Monomer.</text>
</comment>
<comment type="subcellular location">
    <subcellularLocation>
        <location evidence="1">Cytoplasm</location>
    </subcellularLocation>
</comment>
<comment type="similarity">
    <text evidence="1">Belongs to the phosphoenolpyruvate carboxykinase [GTP] family.</text>
</comment>
<reference key="1">
    <citation type="submission" date="2005-03" db="EMBL/GenBank/DDBJ databases">
        <title>Comparison of the complete genome sequences of Rhodococcus erythropolis PR4 and Rhodococcus opacus B4.</title>
        <authorList>
            <person name="Takarada H."/>
            <person name="Sekine M."/>
            <person name="Hosoyama A."/>
            <person name="Yamada R."/>
            <person name="Fujisawa T."/>
            <person name="Omata S."/>
            <person name="Shimizu A."/>
            <person name="Tsukatani N."/>
            <person name="Tanikawa S."/>
            <person name="Fujita N."/>
            <person name="Harayama S."/>
        </authorList>
    </citation>
    <scope>NUCLEOTIDE SEQUENCE [LARGE SCALE GENOMIC DNA]</scope>
    <source>
        <strain>PR4 / NBRC 100887</strain>
    </source>
</reference>